<keyword id="KW-0067">ATP-binding</keyword>
<keyword id="KW-1003">Cell membrane</keyword>
<keyword id="KW-0375">Hydrogen ion transport</keyword>
<keyword id="KW-0406">Ion transport</keyword>
<keyword id="KW-0460">Magnesium</keyword>
<keyword id="KW-0472">Membrane</keyword>
<keyword id="KW-0479">Metal-binding</keyword>
<keyword id="KW-0547">Nucleotide-binding</keyword>
<keyword id="KW-1185">Reference proteome</keyword>
<keyword id="KW-1278">Translocase</keyword>
<keyword id="KW-0812">Transmembrane</keyword>
<keyword id="KW-1133">Transmembrane helix</keyword>
<keyword id="KW-0813">Transport</keyword>
<dbReference type="EC" id="7.1.2.1"/>
<dbReference type="EMBL" id="J04421">
    <property type="protein sequence ID" value="AAA83387.1"/>
    <property type="molecule type" value="Genomic_DNA"/>
</dbReference>
<dbReference type="EMBL" id="U44030">
    <property type="protein sequence ID" value="AAB68184.1"/>
    <property type="molecule type" value="Genomic_DNA"/>
</dbReference>
<dbReference type="EMBL" id="BK006949">
    <property type="protein sequence ID" value="DAA11394.1"/>
    <property type="molecule type" value="Genomic_DNA"/>
</dbReference>
<dbReference type="PIR" id="S62039">
    <property type="entry name" value="PXBY2P"/>
</dbReference>
<dbReference type="RefSeq" id="NP_015289.1">
    <property type="nucleotide sequence ID" value="NM_001183850.1"/>
</dbReference>
<dbReference type="SMR" id="P19657"/>
<dbReference type="BioGRID" id="36143">
    <property type="interactions" value="495"/>
</dbReference>
<dbReference type="DIP" id="DIP-4036N"/>
<dbReference type="FunCoup" id="P19657">
    <property type="interactions" value="336"/>
</dbReference>
<dbReference type="IntAct" id="P19657">
    <property type="interactions" value="120"/>
</dbReference>
<dbReference type="MINT" id="P19657"/>
<dbReference type="STRING" id="4932.YPL036W"/>
<dbReference type="iPTMnet" id="P19657"/>
<dbReference type="PaxDb" id="4932-YPL036W"/>
<dbReference type="PeptideAtlas" id="P19657"/>
<dbReference type="EnsemblFungi" id="YPL036W_mRNA">
    <property type="protein sequence ID" value="YPL036W"/>
    <property type="gene ID" value="YPL036W"/>
</dbReference>
<dbReference type="GeneID" id="856071"/>
<dbReference type="KEGG" id="sce:YPL036W"/>
<dbReference type="AGR" id="SGD:S000005957"/>
<dbReference type="SGD" id="S000005957">
    <property type="gene designation" value="PMA2"/>
</dbReference>
<dbReference type="VEuPathDB" id="FungiDB:YPL036W"/>
<dbReference type="eggNOG" id="KOG0205">
    <property type="taxonomic scope" value="Eukaryota"/>
</dbReference>
<dbReference type="GeneTree" id="ENSGT00940000176570"/>
<dbReference type="HOGENOM" id="CLU_002360_6_0_1"/>
<dbReference type="InParanoid" id="P19657"/>
<dbReference type="OMA" id="APLWVFK"/>
<dbReference type="OrthoDB" id="116380at2759"/>
<dbReference type="BioCyc" id="YEAST:G3O-33950-MONOMER"/>
<dbReference type="BioGRID-ORCS" id="856071">
    <property type="hits" value="6 hits in 10 CRISPR screens"/>
</dbReference>
<dbReference type="PRO" id="PR:P19657"/>
<dbReference type="Proteomes" id="UP000002311">
    <property type="component" value="Chromosome XVI"/>
</dbReference>
<dbReference type="RNAct" id="P19657">
    <property type="molecule type" value="protein"/>
</dbReference>
<dbReference type="GO" id="GO:0071944">
    <property type="term" value="C:cell periphery"/>
    <property type="evidence" value="ECO:0007005"/>
    <property type="project" value="SGD"/>
</dbReference>
<dbReference type="GO" id="GO:0005739">
    <property type="term" value="C:mitochondrion"/>
    <property type="evidence" value="ECO:0007005"/>
    <property type="project" value="SGD"/>
</dbReference>
<dbReference type="GO" id="GO:0005886">
    <property type="term" value="C:plasma membrane"/>
    <property type="evidence" value="ECO:0000314"/>
    <property type="project" value="SGD"/>
</dbReference>
<dbReference type="GO" id="GO:0005524">
    <property type="term" value="F:ATP binding"/>
    <property type="evidence" value="ECO:0007669"/>
    <property type="project" value="UniProtKB-KW"/>
</dbReference>
<dbReference type="GO" id="GO:0016887">
    <property type="term" value="F:ATP hydrolysis activity"/>
    <property type="evidence" value="ECO:0007669"/>
    <property type="project" value="InterPro"/>
</dbReference>
<dbReference type="GO" id="GO:0046872">
    <property type="term" value="F:metal ion binding"/>
    <property type="evidence" value="ECO:0007669"/>
    <property type="project" value="UniProtKB-KW"/>
</dbReference>
<dbReference type="GO" id="GO:0008553">
    <property type="term" value="F:P-type proton-exporting transporter activity"/>
    <property type="evidence" value="ECO:0000314"/>
    <property type="project" value="SGD"/>
</dbReference>
<dbReference type="GO" id="GO:0120029">
    <property type="term" value="P:proton export across plasma membrane"/>
    <property type="evidence" value="ECO:0007669"/>
    <property type="project" value="InterPro"/>
</dbReference>
<dbReference type="GO" id="GO:1902600">
    <property type="term" value="P:proton transmembrane transport"/>
    <property type="evidence" value="ECO:0000314"/>
    <property type="project" value="SGD"/>
</dbReference>
<dbReference type="GO" id="GO:0051453">
    <property type="term" value="P:regulation of intracellular pH"/>
    <property type="evidence" value="ECO:0000318"/>
    <property type="project" value="GO_Central"/>
</dbReference>
<dbReference type="CDD" id="cd02076">
    <property type="entry name" value="P-type_ATPase_H"/>
    <property type="match status" value="1"/>
</dbReference>
<dbReference type="FunFam" id="2.70.150.10:FF:000011">
    <property type="entry name" value="Plasma membrane ATPase"/>
    <property type="match status" value="1"/>
</dbReference>
<dbReference type="FunFam" id="3.40.1110.10:FF:000005">
    <property type="entry name" value="Plasma membrane ATPase"/>
    <property type="match status" value="1"/>
</dbReference>
<dbReference type="FunFam" id="3.40.50.1000:FF:000008">
    <property type="entry name" value="Plasma membrane ATPase"/>
    <property type="match status" value="1"/>
</dbReference>
<dbReference type="Gene3D" id="3.40.1110.10">
    <property type="entry name" value="Calcium-transporting ATPase, cytoplasmic domain N"/>
    <property type="match status" value="1"/>
</dbReference>
<dbReference type="Gene3D" id="2.70.150.10">
    <property type="entry name" value="Calcium-transporting ATPase, cytoplasmic transduction domain A"/>
    <property type="match status" value="1"/>
</dbReference>
<dbReference type="Gene3D" id="1.20.1110.10">
    <property type="entry name" value="Calcium-transporting ATPase, transmembrane domain"/>
    <property type="match status" value="1"/>
</dbReference>
<dbReference type="Gene3D" id="3.40.50.1000">
    <property type="entry name" value="HAD superfamily/HAD-like"/>
    <property type="match status" value="1"/>
</dbReference>
<dbReference type="InterPro" id="IPR004014">
    <property type="entry name" value="ATPase_P-typ_cation-transptr_N"/>
</dbReference>
<dbReference type="InterPro" id="IPR023299">
    <property type="entry name" value="ATPase_P-typ_cyto_dom_N"/>
</dbReference>
<dbReference type="InterPro" id="IPR018303">
    <property type="entry name" value="ATPase_P-typ_P_site"/>
</dbReference>
<dbReference type="InterPro" id="IPR023298">
    <property type="entry name" value="ATPase_P-typ_TM_dom_sf"/>
</dbReference>
<dbReference type="InterPro" id="IPR008250">
    <property type="entry name" value="ATPase_P-typ_transduc_dom_A_sf"/>
</dbReference>
<dbReference type="InterPro" id="IPR036412">
    <property type="entry name" value="HAD-like_sf"/>
</dbReference>
<dbReference type="InterPro" id="IPR023214">
    <property type="entry name" value="HAD_sf"/>
</dbReference>
<dbReference type="InterPro" id="IPR006534">
    <property type="entry name" value="P-type_ATPase_IIIA"/>
</dbReference>
<dbReference type="InterPro" id="IPR001757">
    <property type="entry name" value="P_typ_ATPase"/>
</dbReference>
<dbReference type="InterPro" id="IPR044492">
    <property type="entry name" value="P_typ_ATPase_HD_dom"/>
</dbReference>
<dbReference type="NCBIfam" id="TIGR01647">
    <property type="entry name" value="ATPase-IIIA_H"/>
    <property type="match status" value="1"/>
</dbReference>
<dbReference type="NCBIfam" id="TIGR01494">
    <property type="entry name" value="ATPase_P-type"/>
    <property type="match status" value="3"/>
</dbReference>
<dbReference type="PANTHER" id="PTHR42861">
    <property type="entry name" value="CALCIUM-TRANSPORTING ATPASE"/>
    <property type="match status" value="1"/>
</dbReference>
<dbReference type="Pfam" id="PF00690">
    <property type="entry name" value="Cation_ATPase_N"/>
    <property type="match status" value="1"/>
</dbReference>
<dbReference type="Pfam" id="PF00122">
    <property type="entry name" value="E1-E2_ATPase"/>
    <property type="match status" value="1"/>
</dbReference>
<dbReference type="Pfam" id="PF00702">
    <property type="entry name" value="Hydrolase"/>
    <property type="match status" value="1"/>
</dbReference>
<dbReference type="PRINTS" id="PR00119">
    <property type="entry name" value="CATATPASE"/>
</dbReference>
<dbReference type="PRINTS" id="PR00120">
    <property type="entry name" value="HATPASE"/>
</dbReference>
<dbReference type="SFLD" id="SFLDG00002">
    <property type="entry name" value="C1.7:_P-type_atpase_like"/>
    <property type="match status" value="1"/>
</dbReference>
<dbReference type="SFLD" id="SFLDF00027">
    <property type="entry name" value="p-type_atpase"/>
    <property type="match status" value="1"/>
</dbReference>
<dbReference type="SMART" id="SM00831">
    <property type="entry name" value="Cation_ATPase_N"/>
    <property type="match status" value="1"/>
</dbReference>
<dbReference type="SUPFAM" id="SSF81653">
    <property type="entry name" value="Calcium ATPase, transduction domain A"/>
    <property type="match status" value="1"/>
</dbReference>
<dbReference type="SUPFAM" id="SSF81665">
    <property type="entry name" value="Calcium ATPase, transmembrane domain M"/>
    <property type="match status" value="1"/>
</dbReference>
<dbReference type="SUPFAM" id="SSF56784">
    <property type="entry name" value="HAD-like"/>
    <property type="match status" value="1"/>
</dbReference>
<dbReference type="PROSITE" id="PS00154">
    <property type="entry name" value="ATPASE_E1_E2"/>
    <property type="match status" value="1"/>
</dbReference>
<evidence type="ECO:0000250" key="1"/>
<evidence type="ECO:0000255" key="2"/>
<evidence type="ECO:0000256" key="3">
    <source>
        <dbReference type="SAM" id="MobiDB-lite"/>
    </source>
</evidence>
<evidence type="ECO:0000305" key="4"/>
<sequence length="947" mass="102172">MSSTEAKQYKEKPSKEYLHASDGDDPANNSAASSSSSSSTSTSASSSAAAVPRKAAAASAADDSDSDEDIDQLIDELQSNYGEGDESGEEEVRTDGVHAGQRVVPEKDLSTDPAYGLTSDEVARRRKKYGLNQMAEENESLIVKFLMFFVGPIQFVMEAAAILAAGLSDWVDVGVICALLLLNASVGFIQEFQAGSIVDELKKTLANTATVIRDGQLIEIPANEVVPGEILQLESGTIAPADGRIVTEDCFLQIDQSAITGESLAAEKHYGDEVFSSSTVKTGEAFMVVTATGDNTFVGRAAALVGQASGVEGHFTEVLNGIGIILLVLVIATLLLVWTACFYRTVGIVSILRYTLGITIIGVPVGLPAVVTTTMAVGAAYLAKKQAIVQKLSAIESLAGVEILCSDKTGTLTKNKLSLHEPYTVEGVSPDDLMLTACLAASRKKKGLDAIDKAFLKSLIEYPKAKDALTKYKVLEFHPFDPVSKKVTAVVESPEGERIVCVKGAPLFVLKTVEEDHPIPEDVHENYENKVAELASRGFRALGVARKRGEGHWEILGVMPCMDPPRDDTAQTINEARNLGLRIKMLTGDAVGIAKETCRQLGLGTNIYNAERLGLGGGGDMPGSELADFVENADGFAEVFPQHKYRVVEILQNRGYLVAMTGDGVNDAPSLKKADTGIAVEGATDAARSAADIVFLAPGLSAIIDALKTSRQIFHRMYSYVVYRIALSLHLEIFLGLWIAILNNSLDINLIVFIAIFADVATLTIAYDNAPYAPEPVKWNLPRLWGMSIILGIVLAIGSWITLTTMFLPNGGIIQNFGAMNGVMFLQISLTENWLIFVTRAAGPFWSSIPSWQLAGAVFAVDIIATMFTLFGWWSENWTDIVSVVRVWIWSIGIFCVLGGFYYIMSTSQAFDRLMNGKSLKEKKSTRSVEDFMAAMQRVSTQHEKSS</sequence>
<organism>
    <name type="scientific">Saccharomyces cerevisiae (strain ATCC 204508 / S288c)</name>
    <name type="common">Baker's yeast</name>
    <dbReference type="NCBI Taxonomy" id="559292"/>
    <lineage>
        <taxon>Eukaryota</taxon>
        <taxon>Fungi</taxon>
        <taxon>Dikarya</taxon>
        <taxon>Ascomycota</taxon>
        <taxon>Saccharomycotina</taxon>
        <taxon>Saccharomycetes</taxon>
        <taxon>Saccharomycetales</taxon>
        <taxon>Saccharomycetaceae</taxon>
        <taxon>Saccharomyces</taxon>
    </lineage>
</organism>
<gene>
    <name type="primary">PMA2</name>
    <name type="ordered locus">YPL036W</name>
</gene>
<comment type="function">
    <text>The plasma membrane ATPase of plants and fungi is a hydrogen ion pump. The proton gradient it generates drives the active transport of nutrients by H(+)-symport. The resulting external acidification and/or internal alkinization may mediate growth responses.</text>
</comment>
<comment type="catalytic activity">
    <reaction>
        <text>ATP + H2O + H(+)(in) = ADP + phosphate + 2 H(+)(out)</text>
        <dbReference type="Rhea" id="RHEA:20852"/>
        <dbReference type="ChEBI" id="CHEBI:15377"/>
        <dbReference type="ChEBI" id="CHEBI:15378"/>
        <dbReference type="ChEBI" id="CHEBI:30616"/>
        <dbReference type="ChEBI" id="CHEBI:43474"/>
        <dbReference type="ChEBI" id="CHEBI:456216"/>
        <dbReference type="EC" id="7.1.2.1"/>
    </reaction>
</comment>
<comment type="subcellular location">
    <subcellularLocation>
        <location>Cell membrane</location>
        <topology>Multi-pass membrane protein</topology>
    </subcellularLocation>
</comment>
<comment type="miscellaneous">
    <text>There are two plasma membrane ATPases in yeast. This is the minor isoform.</text>
</comment>
<comment type="similarity">
    <text evidence="4">Belongs to the cation transport ATPase (P-type) (TC 3.A.3) family. Type IIIA subfamily.</text>
</comment>
<name>PMA2_YEAST</name>
<accession>P19657</accession>
<accession>D6W3X8</accession>
<proteinExistence type="evidence at protein level"/>
<feature type="chain" id="PRO_0000046272" description="Plasma membrane ATPase 2">
    <location>
        <begin position="1"/>
        <end position="947"/>
    </location>
</feature>
<feature type="topological domain" description="Cytoplasmic" evidence="2">
    <location>
        <begin position="1"/>
        <end position="144"/>
    </location>
</feature>
<feature type="transmembrane region" description="Helical; Name=1" evidence="2">
    <location>
        <begin position="145"/>
        <end position="165"/>
    </location>
</feature>
<feature type="topological domain" description="Extracellular" evidence="2">
    <location>
        <begin position="166"/>
        <end position="169"/>
    </location>
</feature>
<feature type="transmembrane region" description="Helical; Name=2" evidence="2">
    <location>
        <begin position="170"/>
        <end position="189"/>
    </location>
</feature>
<feature type="topological domain" description="Cytoplasmic" evidence="2">
    <location>
        <begin position="190"/>
        <end position="320"/>
    </location>
</feature>
<feature type="transmembrane region" description="Helical; Name=3" evidence="2">
    <location>
        <begin position="321"/>
        <end position="342"/>
    </location>
</feature>
<feature type="topological domain" description="Extracellular" evidence="2">
    <location>
        <begin position="343"/>
        <end position="353"/>
    </location>
</feature>
<feature type="transmembrane region" description="Helical; Name=4" evidence="2">
    <location>
        <begin position="354"/>
        <end position="376"/>
    </location>
</feature>
<feature type="topological domain" description="Cytoplasmic" evidence="2">
    <location>
        <begin position="377"/>
        <end position="748"/>
    </location>
</feature>
<feature type="transmembrane region" description="Helical; Name=5" evidence="2">
    <location>
        <begin position="749"/>
        <end position="767"/>
    </location>
</feature>
<feature type="topological domain" description="Extracellular" evidence="2">
    <location>
        <begin position="768"/>
        <end position="783"/>
    </location>
</feature>
<feature type="transmembrane region" description="Helical; Name=6" evidence="2">
    <location>
        <begin position="784"/>
        <end position="803"/>
    </location>
</feature>
<feature type="topological domain" description="Cytoplasmic" evidence="2">
    <location>
        <begin position="804"/>
        <end position="853"/>
    </location>
</feature>
<feature type="transmembrane region" description="Helical; Name=7" evidence="2">
    <location>
        <begin position="854"/>
        <end position="874"/>
    </location>
</feature>
<feature type="topological domain" description="Extracellular" evidence="2">
    <location>
        <begin position="875"/>
        <end position="886"/>
    </location>
</feature>
<feature type="transmembrane region" description="Helical; Name=8" evidence="2">
    <location>
        <begin position="887"/>
        <end position="903"/>
    </location>
</feature>
<feature type="topological domain" description="Cytoplasmic" evidence="2">
    <location>
        <begin position="904"/>
        <end position="947"/>
    </location>
</feature>
<feature type="region of interest" description="Disordered" evidence="3">
    <location>
        <begin position="1"/>
        <end position="103"/>
    </location>
</feature>
<feature type="compositionally biased region" description="Basic and acidic residues" evidence="3">
    <location>
        <begin position="7"/>
        <end position="22"/>
    </location>
</feature>
<feature type="compositionally biased region" description="Low complexity" evidence="3">
    <location>
        <begin position="26"/>
        <end position="61"/>
    </location>
</feature>
<feature type="compositionally biased region" description="Acidic residues" evidence="3">
    <location>
        <begin position="62"/>
        <end position="74"/>
    </location>
</feature>
<feature type="active site" description="4-aspartylphosphate intermediate" evidence="1">
    <location>
        <position position="407"/>
    </location>
</feature>
<feature type="binding site" evidence="1">
    <location>
        <position position="663"/>
    </location>
    <ligand>
        <name>Mg(2+)</name>
        <dbReference type="ChEBI" id="CHEBI:18420"/>
    </ligand>
</feature>
<feature type="binding site" evidence="1">
    <location>
        <position position="667"/>
    </location>
    <ligand>
        <name>Mg(2+)</name>
        <dbReference type="ChEBI" id="CHEBI:18420"/>
    </ligand>
</feature>
<feature type="sequence conflict" description="In Ref. 1; AAA83387." evidence="4" ref="1">
    <original>E</original>
    <variation>D</variation>
    <location>
        <position position="944"/>
    </location>
</feature>
<protein>
    <recommendedName>
        <fullName>Plasma membrane ATPase 2</fullName>
        <ecNumber>7.1.2.1</ecNumber>
    </recommendedName>
    <alternativeName>
        <fullName>Proton pump 2</fullName>
    </alternativeName>
</protein>
<reference key="1">
    <citation type="journal article" date="1988" name="J. Biol. Chem.">
        <title>A second transport ATPase gene in Saccharomyces cerevisiae.</title>
        <authorList>
            <person name="Schlesser A."/>
            <person name="Ulaszewski S."/>
            <person name="Ghislain M."/>
            <person name="Goffeau A."/>
        </authorList>
    </citation>
    <scope>NUCLEOTIDE SEQUENCE [GENOMIC DNA]</scope>
</reference>
<reference key="2">
    <citation type="journal article" date="1997" name="Nature">
        <title>The nucleotide sequence of Saccharomyces cerevisiae chromosome XVI.</title>
        <authorList>
            <person name="Bussey H."/>
            <person name="Storms R.K."/>
            <person name="Ahmed A."/>
            <person name="Albermann K."/>
            <person name="Allen E."/>
            <person name="Ansorge W."/>
            <person name="Araujo R."/>
            <person name="Aparicio A."/>
            <person name="Barrell B.G."/>
            <person name="Badcock K."/>
            <person name="Benes V."/>
            <person name="Botstein D."/>
            <person name="Bowman S."/>
            <person name="Brueckner M."/>
            <person name="Carpenter J."/>
            <person name="Cherry J.M."/>
            <person name="Chung E."/>
            <person name="Churcher C.M."/>
            <person name="Coster F."/>
            <person name="Davis K."/>
            <person name="Davis R.W."/>
            <person name="Dietrich F.S."/>
            <person name="Delius H."/>
            <person name="DiPaolo T."/>
            <person name="Dubois E."/>
            <person name="Duesterhoeft A."/>
            <person name="Duncan M."/>
            <person name="Floeth M."/>
            <person name="Fortin N."/>
            <person name="Friesen J.D."/>
            <person name="Fritz C."/>
            <person name="Goffeau A."/>
            <person name="Hall J."/>
            <person name="Hebling U."/>
            <person name="Heumann K."/>
            <person name="Hilbert H."/>
            <person name="Hillier L.W."/>
            <person name="Hunicke-Smith S."/>
            <person name="Hyman R.W."/>
            <person name="Johnston M."/>
            <person name="Kalman S."/>
            <person name="Kleine K."/>
            <person name="Komp C."/>
            <person name="Kurdi O."/>
            <person name="Lashkari D."/>
            <person name="Lew H."/>
            <person name="Lin A."/>
            <person name="Lin D."/>
            <person name="Louis E.J."/>
            <person name="Marathe R."/>
            <person name="Messenguy F."/>
            <person name="Mewes H.-W."/>
            <person name="Mirtipati S."/>
            <person name="Moestl D."/>
            <person name="Mueller-Auer S."/>
            <person name="Namath A."/>
            <person name="Nentwich U."/>
            <person name="Oefner P."/>
            <person name="Pearson D."/>
            <person name="Petel F.X."/>
            <person name="Pohl T.M."/>
            <person name="Purnelle B."/>
            <person name="Rajandream M.A."/>
            <person name="Rechmann S."/>
            <person name="Rieger M."/>
            <person name="Riles L."/>
            <person name="Roberts D."/>
            <person name="Schaefer M."/>
            <person name="Scharfe M."/>
            <person name="Scherens B."/>
            <person name="Schramm S."/>
            <person name="Schroeder M."/>
            <person name="Sdicu A.-M."/>
            <person name="Tettelin H."/>
            <person name="Urrestarazu L.A."/>
            <person name="Ushinsky S."/>
            <person name="Vierendeels F."/>
            <person name="Vissers S."/>
            <person name="Voss H."/>
            <person name="Walsh S.V."/>
            <person name="Wambutt R."/>
            <person name="Wang Y."/>
            <person name="Wedler E."/>
            <person name="Wedler H."/>
            <person name="Winnett E."/>
            <person name="Zhong W.-W."/>
            <person name="Zollner A."/>
            <person name="Vo D.H."/>
            <person name="Hani J."/>
        </authorList>
    </citation>
    <scope>NUCLEOTIDE SEQUENCE [LARGE SCALE GENOMIC DNA]</scope>
    <source>
        <strain>ATCC 204508 / S288c</strain>
    </source>
</reference>
<reference key="3">
    <citation type="journal article" date="2014" name="G3 (Bethesda)">
        <title>The reference genome sequence of Saccharomyces cerevisiae: Then and now.</title>
        <authorList>
            <person name="Engel S.R."/>
            <person name="Dietrich F.S."/>
            <person name="Fisk D.G."/>
            <person name="Binkley G."/>
            <person name="Balakrishnan R."/>
            <person name="Costanzo M.C."/>
            <person name="Dwight S.S."/>
            <person name="Hitz B.C."/>
            <person name="Karra K."/>
            <person name="Nash R.S."/>
            <person name="Weng S."/>
            <person name="Wong E.D."/>
            <person name="Lloyd P."/>
            <person name="Skrzypek M.S."/>
            <person name="Miyasato S.R."/>
            <person name="Simison M."/>
            <person name="Cherry J.M."/>
        </authorList>
    </citation>
    <scope>GENOME REANNOTATION</scope>
    <source>
        <strain>ATCC 204508 / S288c</strain>
    </source>
</reference>
<reference key="4">
    <citation type="journal article" date="2006" name="Proc. Natl. Acad. Sci. U.S.A.">
        <title>A global topology map of the Saccharomyces cerevisiae membrane proteome.</title>
        <authorList>
            <person name="Kim H."/>
            <person name="Melen K."/>
            <person name="Oesterberg M."/>
            <person name="von Heijne G."/>
        </authorList>
    </citation>
    <scope>TOPOLOGY [LARGE SCALE ANALYSIS]</scope>
    <source>
        <strain>ATCC 208353 / W303-1A</strain>
    </source>
</reference>